<keyword id="KW-0963">Cytoplasm</keyword>
<keyword id="KW-0378">Hydrolase</keyword>
<keyword id="KW-1185">Reference proteome</keyword>
<keyword id="KW-0843">Virulence</keyword>
<sequence length="100" mass="11103">MNLTPREKDKLLIAMAAMVARRRLERGVKLNHPEAIALVSDFVVEGARDGRTVAELMEAGAHVITREQVMDGVAEMIRDIQVEATFPDGTKLVTVHEPIR</sequence>
<organism>
    <name type="scientific">Brucella abortus (strain 2308)</name>
    <dbReference type="NCBI Taxonomy" id="359391"/>
    <lineage>
        <taxon>Bacteria</taxon>
        <taxon>Pseudomonadati</taxon>
        <taxon>Pseudomonadota</taxon>
        <taxon>Alphaproteobacteria</taxon>
        <taxon>Hyphomicrobiales</taxon>
        <taxon>Brucellaceae</taxon>
        <taxon>Brucella/Ochrobactrum group</taxon>
        <taxon>Brucella</taxon>
    </lineage>
</organism>
<feature type="chain" id="PRO_0000097999" description="Urease subunit gamma 1">
    <location>
        <begin position="1"/>
        <end position="100"/>
    </location>
</feature>
<comment type="function">
    <text>Disruption of the ure1 gene cluster suggests that it protects brucellae during their passage through the stomach. The major route of infection in human brucellosis is oral.</text>
</comment>
<comment type="catalytic activity">
    <reaction evidence="1">
        <text>urea + 2 H2O + H(+) = hydrogencarbonate + 2 NH4(+)</text>
        <dbReference type="Rhea" id="RHEA:20557"/>
        <dbReference type="ChEBI" id="CHEBI:15377"/>
        <dbReference type="ChEBI" id="CHEBI:15378"/>
        <dbReference type="ChEBI" id="CHEBI:16199"/>
        <dbReference type="ChEBI" id="CHEBI:17544"/>
        <dbReference type="ChEBI" id="CHEBI:28938"/>
        <dbReference type="EC" id="3.5.1.5"/>
    </reaction>
</comment>
<comment type="pathway">
    <text evidence="1">Nitrogen metabolism; urea degradation; CO(2) and NH(3) from urea (urease route): step 1/1.</text>
</comment>
<comment type="subunit">
    <text evidence="1">Heterotrimer of UreA (gamma), UreB (beta) and UreC (alpha) subunits. Three heterotrimers associate to form the active enzyme.</text>
</comment>
<comment type="subcellular location">
    <subcellularLocation>
        <location evidence="1">Cytoplasm</location>
    </subcellularLocation>
</comment>
<comment type="similarity">
    <text evidence="1">Belongs to the urease gamma subunit family.</text>
</comment>
<reference key="1">
    <citation type="journal article" date="2007" name="Infect. Immun.">
        <title>Characterization of the urease operon of Brucella abortus and assessment of its role in virulence of the bacterium.</title>
        <authorList>
            <person name="Sangari F.J."/>
            <person name="Seoane A."/>
            <person name="Rodriguez M.C."/>
            <person name="Aguero J."/>
            <person name="Garcia Lobo J.M."/>
        </authorList>
    </citation>
    <scope>NUCLEOTIDE SEQUENCE [GENOMIC DNA]</scope>
    <scope>CHARACTERIZATION OF ROLE IN VIRULENCE</scope>
</reference>
<reference key="2">
    <citation type="journal article" date="2005" name="Infect. Immun.">
        <title>Whole-genome analyses of speciation events in pathogenic Brucellae.</title>
        <authorList>
            <person name="Chain P.S."/>
            <person name="Comerci D.J."/>
            <person name="Tolmasky M.E."/>
            <person name="Larimer F.W."/>
            <person name="Malfatti S.A."/>
            <person name="Vergez L.M."/>
            <person name="Aguero F."/>
            <person name="Land M.L."/>
            <person name="Ugalde R.A."/>
            <person name="Garcia E."/>
        </authorList>
    </citation>
    <scope>NUCLEOTIDE SEQUENCE [LARGE SCALE GENOMIC DNA]</scope>
    <source>
        <strain>2308</strain>
    </source>
</reference>
<evidence type="ECO:0000255" key="1">
    <source>
        <dbReference type="HAMAP-Rule" id="MF_00739"/>
    </source>
</evidence>
<gene>
    <name evidence="1" type="primary">ureA1</name>
    <name type="synonym">ureA</name>
    <name type="synonym">ureA-1</name>
    <name type="ordered locus">BAB1_0298</name>
</gene>
<proteinExistence type="evidence at protein level"/>
<dbReference type="EC" id="3.5.1.5" evidence="1"/>
<dbReference type="EMBL" id="AF361941">
    <property type="protein sequence ID" value="AAK51067.1"/>
    <property type="molecule type" value="Genomic_DNA"/>
</dbReference>
<dbReference type="EMBL" id="AM040264">
    <property type="protein sequence ID" value="CAJ10254.1"/>
    <property type="molecule type" value="Genomic_DNA"/>
</dbReference>
<dbReference type="RefSeq" id="WP_002963432.1">
    <property type="nucleotide sequence ID" value="NZ_KN046823.1"/>
</dbReference>
<dbReference type="SMR" id="Q2YPD7"/>
<dbReference type="STRING" id="359391.BAB1_0298"/>
<dbReference type="KEGG" id="bmf:BAB1_0298"/>
<dbReference type="PATRIC" id="fig|359391.11.peg.2345"/>
<dbReference type="HOGENOM" id="CLU_145825_1_0_5"/>
<dbReference type="PhylomeDB" id="Q2YPD7"/>
<dbReference type="UniPathway" id="UPA00258">
    <property type="reaction ID" value="UER00370"/>
</dbReference>
<dbReference type="Proteomes" id="UP000002719">
    <property type="component" value="Chromosome I"/>
</dbReference>
<dbReference type="GO" id="GO:0005737">
    <property type="term" value="C:cytoplasm"/>
    <property type="evidence" value="ECO:0007669"/>
    <property type="project" value="UniProtKB-SubCell"/>
</dbReference>
<dbReference type="GO" id="GO:0016151">
    <property type="term" value="F:nickel cation binding"/>
    <property type="evidence" value="ECO:0007669"/>
    <property type="project" value="InterPro"/>
</dbReference>
<dbReference type="GO" id="GO:0009039">
    <property type="term" value="F:urease activity"/>
    <property type="evidence" value="ECO:0007669"/>
    <property type="project" value="UniProtKB-UniRule"/>
</dbReference>
<dbReference type="GO" id="GO:0043419">
    <property type="term" value="P:urea catabolic process"/>
    <property type="evidence" value="ECO:0007669"/>
    <property type="project" value="UniProtKB-UniRule"/>
</dbReference>
<dbReference type="CDD" id="cd00390">
    <property type="entry name" value="Urease_gamma"/>
    <property type="match status" value="1"/>
</dbReference>
<dbReference type="Gene3D" id="3.30.280.10">
    <property type="entry name" value="Urease, gamma-like subunit"/>
    <property type="match status" value="1"/>
</dbReference>
<dbReference type="HAMAP" id="MF_00739">
    <property type="entry name" value="Urease_gamma"/>
    <property type="match status" value="1"/>
</dbReference>
<dbReference type="InterPro" id="IPR012010">
    <property type="entry name" value="Urease_gamma"/>
</dbReference>
<dbReference type="InterPro" id="IPR002026">
    <property type="entry name" value="Urease_gamma/gamma-beta_su"/>
</dbReference>
<dbReference type="InterPro" id="IPR036463">
    <property type="entry name" value="Urease_gamma_sf"/>
</dbReference>
<dbReference type="InterPro" id="IPR050069">
    <property type="entry name" value="Urease_subunit"/>
</dbReference>
<dbReference type="NCBIfam" id="NF009712">
    <property type="entry name" value="PRK13241.1"/>
    <property type="match status" value="1"/>
</dbReference>
<dbReference type="NCBIfam" id="TIGR00193">
    <property type="entry name" value="urease_gam"/>
    <property type="match status" value="1"/>
</dbReference>
<dbReference type="PANTHER" id="PTHR33569">
    <property type="entry name" value="UREASE"/>
    <property type="match status" value="1"/>
</dbReference>
<dbReference type="PANTHER" id="PTHR33569:SF1">
    <property type="entry name" value="UREASE"/>
    <property type="match status" value="1"/>
</dbReference>
<dbReference type="Pfam" id="PF00547">
    <property type="entry name" value="Urease_gamma"/>
    <property type="match status" value="1"/>
</dbReference>
<dbReference type="PIRSF" id="PIRSF001223">
    <property type="entry name" value="Urease_gamma"/>
    <property type="match status" value="1"/>
</dbReference>
<dbReference type="SUPFAM" id="SSF54111">
    <property type="entry name" value="Urease, gamma-subunit"/>
    <property type="match status" value="1"/>
</dbReference>
<protein>
    <recommendedName>
        <fullName evidence="1">Urease subunit gamma 1</fullName>
        <ecNumber evidence="1">3.5.1.5</ecNumber>
    </recommendedName>
    <alternativeName>
        <fullName evidence="1">Urea amidohydrolase subunit gamma 1</fullName>
    </alternativeName>
</protein>
<name>URE31_BRUA2</name>
<accession>Q2YPD7</accession>
<accession>Q57F87</accession>
<accession>Q93T83</accession>